<dbReference type="EMBL" id="AE000782">
    <property type="protein sequence ID" value="AAB90752.1"/>
    <property type="molecule type" value="Genomic_DNA"/>
</dbReference>
<dbReference type="PIR" id="C69310">
    <property type="entry name" value="C69310"/>
</dbReference>
<dbReference type="RefSeq" id="WP_010877990.1">
    <property type="nucleotide sequence ID" value="NC_000917.1"/>
</dbReference>
<dbReference type="SMR" id="O29767"/>
<dbReference type="STRING" id="224325.AF_0483"/>
<dbReference type="PaxDb" id="224325-AF_0483"/>
<dbReference type="EnsemblBacteria" id="AAB90752">
    <property type="protein sequence ID" value="AAB90752"/>
    <property type="gene ID" value="AF_0483"/>
</dbReference>
<dbReference type="KEGG" id="afu:AF_0483"/>
<dbReference type="eggNOG" id="arCOG06113">
    <property type="taxonomic scope" value="Archaea"/>
</dbReference>
<dbReference type="HOGENOM" id="CLU_193439_0_0_2"/>
<dbReference type="OrthoDB" id="70849at2157"/>
<dbReference type="Proteomes" id="UP000002199">
    <property type="component" value="Chromosome"/>
</dbReference>
<dbReference type="Gene3D" id="2.20.25.10">
    <property type="match status" value="1"/>
</dbReference>
<dbReference type="SUPFAM" id="SSF57783">
    <property type="entry name" value="Zinc beta-ribbon"/>
    <property type="match status" value="1"/>
</dbReference>
<reference key="1">
    <citation type="journal article" date="1997" name="Nature">
        <title>The complete genome sequence of the hyperthermophilic, sulphate-reducing archaeon Archaeoglobus fulgidus.</title>
        <authorList>
            <person name="Klenk H.-P."/>
            <person name="Clayton R.A."/>
            <person name="Tomb J.-F."/>
            <person name="White O."/>
            <person name="Nelson K.E."/>
            <person name="Ketchum K.A."/>
            <person name="Dodson R.J."/>
            <person name="Gwinn M.L."/>
            <person name="Hickey E.K."/>
            <person name="Peterson J.D."/>
            <person name="Richardson D.L."/>
            <person name="Kerlavage A.R."/>
            <person name="Graham D.E."/>
            <person name="Kyrpides N.C."/>
            <person name="Fleischmann R.D."/>
            <person name="Quackenbush J."/>
            <person name="Lee N.H."/>
            <person name="Sutton G.G."/>
            <person name="Gill S.R."/>
            <person name="Kirkness E.F."/>
            <person name="Dougherty B.A."/>
            <person name="McKenney K."/>
            <person name="Adams M.D."/>
            <person name="Loftus B.J."/>
            <person name="Peterson S.N."/>
            <person name="Reich C.I."/>
            <person name="McNeil L.K."/>
            <person name="Badger J.H."/>
            <person name="Glodek A."/>
            <person name="Zhou L."/>
            <person name="Overbeek R."/>
            <person name="Gocayne J.D."/>
            <person name="Weidman J.F."/>
            <person name="McDonald L.A."/>
            <person name="Utterback T.R."/>
            <person name="Cotton M.D."/>
            <person name="Spriggs T."/>
            <person name="Artiach P."/>
            <person name="Kaine B.P."/>
            <person name="Sykes S.M."/>
            <person name="Sadow P.W."/>
            <person name="D'Andrea K.P."/>
            <person name="Bowman C."/>
            <person name="Fujii C."/>
            <person name="Garland S.A."/>
            <person name="Mason T.M."/>
            <person name="Olsen G.J."/>
            <person name="Fraser C.M."/>
            <person name="Smith H.O."/>
            <person name="Woese C.R."/>
            <person name="Venter J.C."/>
        </authorList>
    </citation>
    <scope>NUCLEOTIDE SEQUENCE [LARGE SCALE GENOMIC DNA]</scope>
    <source>
        <strain>ATCC 49558 / DSM 4304 / JCM 9628 / NBRC 100126 / VC-16</strain>
    </source>
</reference>
<protein>
    <recommendedName>
        <fullName>Uncharacterized protein AF_0483</fullName>
    </recommendedName>
</protein>
<gene>
    <name type="ordered locus">AF_0483</name>
</gene>
<feature type="chain" id="PRO_0000127881" description="Uncharacterized protein AF_0483">
    <location>
        <begin position="1"/>
        <end position="71"/>
    </location>
</feature>
<feature type="region of interest" description="Disordered" evidence="1">
    <location>
        <begin position="52"/>
        <end position="71"/>
    </location>
</feature>
<keyword id="KW-1185">Reference proteome</keyword>
<evidence type="ECO:0000256" key="1">
    <source>
        <dbReference type="SAM" id="MobiDB-lite"/>
    </source>
</evidence>
<organism>
    <name type="scientific">Archaeoglobus fulgidus (strain ATCC 49558 / DSM 4304 / JCM 9628 / NBRC 100126 / VC-16)</name>
    <dbReference type="NCBI Taxonomy" id="224325"/>
    <lineage>
        <taxon>Archaea</taxon>
        <taxon>Methanobacteriati</taxon>
        <taxon>Methanobacteriota</taxon>
        <taxon>Archaeoglobi</taxon>
        <taxon>Archaeoglobales</taxon>
        <taxon>Archaeoglobaceae</taxon>
        <taxon>Archaeoglobus</taxon>
    </lineage>
</organism>
<name>Y483_ARCFU</name>
<sequence>MKRILVCPVCKSKEVELDAGGYTGKYYCKNCGYVGSFILEMTEGEYREMMEKEKFERKEDEKSKPKGVRED</sequence>
<proteinExistence type="predicted"/>
<accession>O29767</accession>